<reference key="1">
    <citation type="submission" date="2006-03" db="EMBL/GenBank/DDBJ databases">
        <title>Complete sequence of chromosome of Nitrobacter hamburgensis X14.</title>
        <authorList>
            <consortium name="US DOE Joint Genome Institute"/>
            <person name="Copeland A."/>
            <person name="Lucas S."/>
            <person name="Lapidus A."/>
            <person name="Barry K."/>
            <person name="Detter J.C."/>
            <person name="Glavina del Rio T."/>
            <person name="Hammon N."/>
            <person name="Israni S."/>
            <person name="Dalin E."/>
            <person name="Tice H."/>
            <person name="Pitluck S."/>
            <person name="Chain P."/>
            <person name="Malfatti S."/>
            <person name="Shin M."/>
            <person name="Vergez L."/>
            <person name="Schmutz J."/>
            <person name="Larimer F."/>
            <person name="Land M."/>
            <person name="Hauser L."/>
            <person name="Kyrpides N."/>
            <person name="Ivanova N."/>
            <person name="Ward B."/>
            <person name="Arp D."/>
            <person name="Klotz M."/>
            <person name="Stein L."/>
            <person name="O'Mullan G."/>
            <person name="Starkenburg S."/>
            <person name="Sayavedra L."/>
            <person name="Poret-Peterson A.T."/>
            <person name="Gentry M.E."/>
            <person name="Bruce D."/>
            <person name="Richardson P."/>
        </authorList>
    </citation>
    <scope>NUCLEOTIDE SEQUENCE [LARGE SCALE GENOMIC DNA]</scope>
    <source>
        <strain>DSM 10229 / NCIMB 13809 / X14</strain>
    </source>
</reference>
<comment type="function">
    <text evidence="1">An accessory protein needed during the final step in the assembly of 30S ribosomal subunit, possibly for assembly of the head region. Essential for efficient processing of 16S rRNA. May be needed both before and after RbfA during the maturation of 16S rRNA. It has affinity for free ribosomal 30S subunits but not for 70S ribosomes.</text>
</comment>
<comment type="subunit">
    <text evidence="1">Binds ribosomal protein uS19.</text>
</comment>
<comment type="subcellular location">
    <subcellularLocation>
        <location evidence="1">Cytoplasm</location>
    </subcellularLocation>
</comment>
<comment type="domain">
    <text evidence="1">The PRC barrel domain binds ribosomal protein uS19.</text>
</comment>
<comment type="similarity">
    <text evidence="1">Belongs to the RimM family.</text>
</comment>
<accession>Q1QHI8</accession>
<feature type="chain" id="PRO_1000001206" description="Ribosome maturation factor RimM">
    <location>
        <begin position="1"/>
        <end position="173"/>
    </location>
</feature>
<feature type="domain" description="PRC barrel" evidence="1">
    <location>
        <begin position="92"/>
        <end position="165"/>
    </location>
</feature>
<proteinExistence type="inferred from homology"/>
<organism>
    <name type="scientific">Nitrobacter hamburgensis (strain DSM 10229 / NCIMB 13809 / X14)</name>
    <dbReference type="NCBI Taxonomy" id="323097"/>
    <lineage>
        <taxon>Bacteria</taxon>
        <taxon>Pseudomonadati</taxon>
        <taxon>Pseudomonadota</taxon>
        <taxon>Alphaproteobacteria</taxon>
        <taxon>Hyphomicrobiales</taxon>
        <taxon>Nitrobacteraceae</taxon>
        <taxon>Nitrobacter</taxon>
    </lineage>
</organism>
<evidence type="ECO:0000255" key="1">
    <source>
        <dbReference type="HAMAP-Rule" id="MF_00014"/>
    </source>
</evidence>
<dbReference type="EMBL" id="CP000319">
    <property type="protein sequence ID" value="ABE64309.1"/>
    <property type="molecule type" value="Genomic_DNA"/>
</dbReference>
<dbReference type="RefSeq" id="WP_011511950.1">
    <property type="nucleotide sequence ID" value="NC_007964.1"/>
</dbReference>
<dbReference type="SMR" id="Q1QHI8"/>
<dbReference type="STRING" id="323097.Nham_3580"/>
<dbReference type="KEGG" id="nha:Nham_3580"/>
<dbReference type="eggNOG" id="COG0806">
    <property type="taxonomic scope" value="Bacteria"/>
</dbReference>
<dbReference type="HOGENOM" id="CLU_077636_0_1_5"/>
<dbReference type="OrthoDB" id="9788191at2"/>
<dbReference type="Proteomes" id="UP000001953">
    <property type="component" value="Chromosome"/>
</dbReference>
<dbReference type="GO" id="GO:0005737">
    <property type="term" value="C:cytoplasm"/>
    <property type="evidence" value="ECO:0007669"/>
    <property type="project" value="UniProtKB-SubCell"/>
</dbReference>
<dbReference type="GO" id="GO:0005840">
    <property type="term" value="C:ribosome"/>
    <property type="evidence" value="ECO:0007669"/>
    <property type="project" value="InterPro"/>
</dbReference>
<dbReference type="GO" id="GO:0043022">
    <property type="term" value="F:ribosome binding"/>
    <property type="evidence" value="ECO:0007669"/>
    <property type="project" value="InterPro"/>
</dbReference>
<dbReference type="GO" id="GO:0042274">
    <property type="term" value="P:ribosomal small subunit biogenesis"/>
    <property type="evidence" value="ECO:0007669"/>
    <property type="project" value="UniProtKB-UniRule"/>
</dbReference>
<dbReference type="GO" id="GO:0006364">
    <property type="term" value="P:rRNA processing"/>
    <property type="evidence" value="ECO:0007669"/>
    <property type="project" value="UniProtKB-UniRule"/>
</dbReference>
<dbReference type="Gene3D" id="2.30.30.240">
    <property type="entry name" value="PRC-barrel domain"/>
    <property type="match status" value="1"/>
</dbReference>
<dbReference type="Gene3D" id="2.40.30.60">
    <property type="entry name" value="RimM"/>
    <property type="match status" value="1"/>
</dbReference>
<dbReference type="HAMAP" id="MF_00014">
    <property type="entry name" value="Ribosome_mat_RimM"/>
    <property type="match status" value="1"/>
</dbReference>
<dbReference type="InterPro" id="IPR011033">
    <property type="entry name" value="PRC_barrel-like_sf"/>
</dbReference>
<dbReference type="InterPro" id="IPR056792">
    <property type="entry name" value="PRC_RimM"/>
</dbReference>
<dbReference type="InterPro" id="IPR011961">
    <property type="entry name" value="RimM"/>
</dbReference>
<dbReference type="InterPro" id="IPR002676">
    <property type="entry name" value="RimM_N"/>
</dbReference>
<dbReference type="InterPro" id="IPR036976">
    <property type="entry name" value="RimM_N_sf"/>
</dbReference>
<dbReference type="InterPro" id="IPR009000">
    <property type="entry name" value="Transl_B-barrel_sf"/>
</dbReference>
<dbReference type="NCBIfam" id="TIGR02273">
    <property type="entry name" value="16S_RimM"/>
    <property type="match status" value="1"/>
</dbReference>
<dbReference type="PANTHER" id="PTHR33692">
    <property type="entry name" value="RIBOSOME MATURATION FACTOR RIMM"/>
    <property type="match status" value="1"/>
</dbReference>
<dbReference type="PANTHER" id="PTHR33692:SF1">
    <property type="entry name" value="RIBOSOME MATURATION FACTOR RIMM"/>
    <property type="match status" value="1"/>
</dbReference>
<dbReference type="Pfam" id="PF24986">
    <property type="entry name" value="PRC_RimM"/>
    <property type="match status" value="1"/>
</dbReference>
<dbReference type="Pfam" id="PF01782">
    <property type="entry name" value="RimM"/>
    <property type="match status" value="1"/>
</dbReference>
<dbReference type="SUPFAM" id="SSF50346">
    <property type="entry name" value="PRC-barrel domain"/>
    <property type="match status" value="1"/>
</dbReference>
<dbReference type="SUPFAM" id="SSF50447">
    <property type="entry name" value="Translation proteins"/>
    <property type="match status" value="1"/>
</dbReference>
<keyword id="KW-0143">Chaperone</keyword>
<keyword id="KW-0963">Cytoplasm</keyword>
<keyword id="KW-1185">Reference proteome</keyword>
<keyword id="KW-0690">Ribosome biogenesis</keyword>
<keyword id="KW-0698">rRNA processing</keyword>
<name>RIMM_NITHX</name>
<protein>
    <recommendedName>
        <fullName evidence="1">Ribosome maturation factor RimM</fullName>
    </recommendedName>
</protein>
<gene>
    <name evidence="1" type="primary">rimM</name>
    <name type="ordered locus">Nham_3580</name>
</gene>
<sequence length="173" mass="18368">MTARVCVARIGAAHGLRGEVRLWTFTEDPIAVTRYGSLSTKDGARQFEVTHAREVKDYLVATLTGVTTREEAERLNGTDLYVARDKLPATDEGEFYHADLIGLAAVDVAGKPLGTVAAIHNFGAGDIIEIAPAHGPTLMLPFTDAVVPTVDIAGGRVVIEMPGEIDGDTPDQA</sequence>